<evidence type="ECO:0000255" key="1">
    <source>
        <dbReference type="HAMAP-Rule" id="MF_01667"/>
    </source>
</evidence>
<evidence type="ECO:0000305" key="2"/>
<dbReference type="EC" id="1.1.1.79" evidence="1"/>
<dbReference type="EC" id="1.1.1.81" evidence="1"/>
<dbReference type="EMBL" id="CP000038">
    <property type="protein sequence ID" value="AAZ90377.1"/>
    <property type="status" value="ALT_INIT"/>
    <property type="molecule type" value="Genomic_DNA"/>
</dbReference>
<dbReference type="RefSeq" id="WP_000805015.1">
    <property type="nucleotide sequence ID" value="NC_007384.1"/>
</dbReference>
<dbReference type="SMR" id="Q3YVT5"/>
<dbReference type="GeneID" id="93778284"/>
<dbReference type="KEGG" id="ssn:SSON_3835"/>
<dbReference type="HOGENOM" id="CLU_019796_1_2_6"/>
<dbReference type="Proteomes" id="UP000002529">
    <property type="component" value="Chromosome"/>
</dbReference>
<dbReference type="GO" id="GO:0005829">
    <property type="term" value="C:cytosol"/>
    <property type="evidence" value="ECO:0007669"/>
    <property type="project" value="TreeGrafter"/>
</dbReference>
<dbReference type="GO" id="GO:0005886">
    <property type="term" value="C:plasma membrane"/>
    <property type="evidence" value="ECO:0007669"/>
    <property type="project" value="UniProtKB-UniRule"/>
</dbReference>
<dbReference type="GO" id="GO:0030267">
    <property type="term" value="F:glyoxylate reductase (NADPH) activity"/>
    <property type="evidence" value="ECO:0007669"/>
    <property type="project" value="UniProtKB-UniRule"/>
</dbReference>
<dbReference type="GO" id="GO:0008465">
    <property type="term" value="F:hydroxypyruvate reductase (NADH) activity"/>
    <property type="evidence" value="ECO:0007669"/>
    <property type="project" value="RHEA"/>
</dbReference>
<dbReference type="GO" id="GO:0120509">
    <property type="term" value="F:hydroxypyruvate reductase (NADPH) activity"/>
    <property type="evidence" value="ECO:0007669"/>
    <property type="project" value="RHEA"/>
</dbReference>
<dbReference type="GO" id="GO:0051287">
    <property type="term" value="F:NAD binding"/>
    <property type="evidence" value="ECO:0007669"/>
    <property type="project" value="InterPro"/>
</dbReference>
<dbReference type="CDD" id="cd05301">
    <property type="entry name" value="GDH"/>
    <property type="match status" value="1"/>
</dbReference>
<dbReference type="FunFam" id="3.40.50.720:FF:000026">
    <property type="entry name" value="Glyoxylate/hydroxypyruvate reductase B"/>
    <property type="match status" value="1"/>
</dbReference>
<dbReference type="Gene3D" id="3.40.50.720">
    <property type="entry name" value="NAD(P)-binding Rossmann-like Domain"/>
    <property type="match status" value="2"/>
</dbReference>
<dbReference type="HAMAP" id="MF_01667">
    <property type="entry name" value="2_Hacid_dh_C_GhrB"/>
    <property type="match status" value="1"/>
</dbReference>
<dbReference type="InterPro" id="IPR050223">
    <property type="entry name" value="D-isomer_2-hydroxyacid_DH"/>
</dbReference>
<dbReference type="InterPro" id="IPR006139">
    <property type="entry name" value="D-isomer_2_OHA_DH_cat_dom"/>
</dbReference>
<dbReference type="InterPro" id="IPR029753">
    <property type="entry name" value="D-isomer_DH_CS"/>
</dbReference>
<dbReference type="InterPro" id="IPR006140">
    <property type="entry name" value="D-isomer_DH_NAD-bd"/>
</dbReference>
<dbReference type="InterPro" id="IPR023756">
    <property type="entry name" value="Glyo/OHPyrv_Rdtase_B"/>
</dbReference>
<dbReference type="InterPro" id="IPR036291">
    <property type="entry name" value="NAD(P)-bd_dom_sf"/>
</dbReference>
<dbReference type="NCBIfam" id="NF011938">
    <property type="entry name" value="PRK15409.1"/>
    <property type="match status" value="1"/>
</dbReference>
<dbReference type="PANTHER" id="PTHR10996">
    <property type="entry name" value="2-HYDROXYACID DEHYDROGENASE-RELATED"/>
    <property type="match status" value="1"/>
</dbReference>
<dbReference type="PANTHER" id="PTHR10996:SF283">
    <property type="entry name" value="GLYOXYLATE_HYDROXYPYRUVATE REDUCTASE B"/>
    <property type="match status" value="1"/>
</dbReference>
<dbReference type="Pfam" id="PF00389">
    <property type="entry name" value="2-Hacid_dh"/>
    <property type="match status" value="1"/>
</dbReference>
<dbReference type="Pfam" id="PF02826">
    <property type="entry name" value="2-Hacid_dh_C"/>
    <property type="match status" value="1"/>
</dbReference>
<dbReference type="SUPFAM" id="SSF52283">
    <property type="entry name" value="Formate/glycerate dehydrogenase catalytic domain-like"/>
    <property type="match status" value="1"/>
</dbReference>
<dbReference type="SUPFAM" id="SSF51735">
    <property type="entry name" value="NAD(P)-binding Rossmann-fold domains"/>
    <property type="match status" value="1"/>
</dbReference>
<dbReference type="PROSITE" id="PS00670">
    <property type="entry name" value="D_2_HYDROXYACID_DH_2"/>
    <property type="match status" value="1"/>
</dbReference>
<dbReference type="PROSITE" id="PS00671">
    <property type="entry name" value="D_2_HYDROXYACID_DH_3"/>
    <property type="match status" value="1"/>
</dbReference>
<proteinExistence type="inferred from homology"/>
<gene>
    <name evidence="1" type="primary">ghrB</name>
    <name type="ordered locus">SSON_3835</name>
</gene>
<reference key="1">
    <citation type="journal article" date="2005" name="Nucleic Acids Res.">
        <title>Genome dynamics and diversity of Shigella species, the etiologic agents of bacillary dysentery.</title>
        <authorList>
            <person name="Yang F."/>
            <person name="Yang J."/>
            <person name="Zhang X."/>
            <person name="Chen L."/>
            <person name="Jiang Y."/>
            <person name="Yan Y."/>
            <person name="Tang X."/>
            <person name="Wang J."/>
            <person name="Xiong Z."/>
            <person name="Dong J."/>
            <person name="Xue Y."/>
            <person name="Zhu Y."/>
            <person name="Xu X."/>
            <person name="Sun L."/>
            <person name="Chen S."/>
            <person name="Nie H."/>
            <person name="Peng J."/>
            <person name="Xu J."/>
            <person name="Wang Y."/>
            <person name="Yuan Z."/>
            <person name="Wen Y."/>
            <person name="Yao Z."/>
            <person name="Shen Y."/>
            <person name="Qiang B."/>
            <person name="Hou Y."/>
            <person name="Yu J."/>
            <person name="Jin Q."/>
        </authorList>
    </citation>
    <scope>NUCLEOTIDE SEQUENCE [LARGE SCALE GENOMIC DNA]</scope>
    <source>
        <strain>Ss046</strain>
    </source>
</reference>
<protein>
    <recommendedName>
        <fullName evidence="1">Glyoxylate/hydroxypyruvate reductase B</fullName>
        <ecNumber evidence="1">1.1.1.79</ecNumber>
        <ecNumber evidence="1">1.1.1.81</ecNumber>
    </recommendedName>
</protein>
<comment type="function">
    <text evidence="1">Catalyzes the NADPH-dependent reduction of glyoxylate and hydroxypyruvate into glycolate and glycerate, respectively.</text>
</comment>
<comment type="catalytic activity">
    <reaction evidence="1">
        <text>glycolate + NADP(+) = glyoxylate + NADPH + H(+)</text>
        <dbReference type="Rhea" id="RHEA:10992"/>
        <dbReference type="ChEBI" id="CHEBI:15378"/>
        <dbReference type="ChEBI" id="CHEBI:29805"/>
        <dbReference type="ChEBI" id="CHEBI:36655"/>
        <dbReference type="ChEBI" id="CHEBI:57783"/>
        <dbReference type="ChEBI" id="CHEBI:58349"/>
        <dbReference type="EC" id="1.1.1.79"/>
    </reaction>
</comment>
<comment type="catalytic activity">
    <reaction evidence="1">
        <text>(R)-glycerate + NAD(+) = 3-hydroxypyruvate + NADH + H(+)</text>
        <dbReference type="Rhea" id="RHEA:17905"/>
        <dbReference type="ChEBI" id="CHEBI:15378"/>
        <dbReference type="ChEBI" id="CHEBI:16659"/>
        <dbReference type="ChEBI" id="CHEBI:17180"/>
        <dbReference type="ChEBI" id="CHEBI:57540"/>
        <dbReference type="ChEBI" id="CHEBI:57945"/>
        <dbReference type="EC" id="1.1.1.81"/>
    </reaction>
</comment>
<comment type="catalytic activity">
    <reaction evidence="1">
        <text>(R)-glycerate + NADP(+) = 3-hydroxypyruvate + NADPH + H(+)</text>
        <dbReference type="Rhea" id="RHEA:18657"/>
        <dbReference type="ChEBI" id="CHEBI:15378"/>
        <dbReference type="ChEBI" id="CHEBI:16659"/>
        <dbReference type="ChEBI" id="CHEBI:17180"/>
        <dbReference type="ChEBI" id="CHEBI:57783"/>
        <dbReference type="ChEBI" id="CHEBI:58349"/>
        <dbReference type="EC" id="1.1.1.81"/>
    </reaction>
</comment>
<comment type="subunit">
    <text evidence="1">Homodimer.</text>
</comment>
<comment type="subcellular location">
    <subcellularLocation>
        <location evidence="1">Cytoplasm</location>
    </subcellularLocation>
</comment>
<comment type="similarity">
    <text evidence="1">Belongs to the D-isomer specific 2-hydroxyacid dehydrogenase family. GhrB subfamily.</text>
</comment>
<comment type="sequence caution" evidence="2">
    <conflict type="erroneous initiation">
        <sequence resource="EMBL-CDS" id="AAZ90377"/>
    </conflict>
</comment>
<feature type="chain" id="PRO_0000348404" description="Glyoxylate/hydroxypyruvate reductase B">
    <location>
        <begin position="1"/>
        <end position="324"/>
    </location>
</feature>
<feature type="active site" evidence="1">
    <location>
        <position position="237"/>
    </location>
</feature>
<feature type="active site" evidence="1">
    <location>
        <position position="266"/>
    </location>
</feature>
<feature type="active site" description="Proton donor" evidence="1">
    <location>
        <position position="285"/>
    </location>
</feature>
<accession>Q3YVT5</accession>
<organism>
    <name type="scientific">Shigella sonnei (strain Ss046)</name>
    <dbReference type="NCBI Taxonomy" id="300269"/>
    <lineage>
        <taxon>Bacteria</taxon>
        <taxon>Pseudomonadati</taxon>
        <taxon>Pseudomonadota</taxon>
        <taxon>Gammaproteobacteria</taxon>
        <taxon>Enterobacterales</taxon>
        <taxon>Enterobacteriaceae</taxon>
        <taxon>Shigella</taxon>
    </lineage>
</organism>
<keyword id="KW-0963">Cytoplasm</keyword>
<keyword id="KW-0520">NAD</keyword>
<keyword id="KW-0521">NADP</keyword>
<keyword id="KW-0560">Oxidoreductase</keyword>
<keyword id="KW-1185">Reference proteome</keyword>
<name>GHRB_SHISS</name>
<sequence length="324" mass="35377">MKPSVILYKALPDDLLQRLQEHFTVHQVANLSPQTVEQNAAIFAEAEGLLGSNENVDAALLEKMPKLHATSTISVGYDNFDVDALTARKILLMHTPTVLTETVADTLMALVLSTARRVVEVAERVKAGEWTASIGPDWYGTDVHHKTLGIVGMGRIGMALAQRAHFGFNMPILYNARRHHKEAEERFNARYCDLDTLLQESDFVCLILPLTDETHHLFGAEQFAKMKSSAIFINAGRGPVVDENALIAALQKGEIHAAGLDVFEQEPLSVDSPLLSMANVVAVPHIGSATHETRYGMAACAVDNLIDALQGKVEKNCVNPHVAD</sequence>